<name>LMBD1_ORYSJ</name>
<gene>
    <name type="ordered locus">Os06g0128200</name>
    <name type="ordered locus">LOC_Os06g03760</name>
    <name type="ORF">OsJ_19972</name>
    <name type="ORF">OSJNBa0038F22.26-1</name>
    <name type="ORF">OSJNBa0038F22.26-2</name>
    <name type="ORF">P0538C01.4-1</name>
    <name type="ORF">P0538C01.4-2</name>
</gene>
<organism>
    <name type="scientific">Oryza sativa subsp. japonica</name>
    <name type="common">Rice</name>
    <dbReference type="NCBI Taxonomy" id="39947"/>
    <lineage>
        <taxon>Eukaryota</taxon>
        <taxon>Viridiplantae</taxon>
        <taxon>Streptophyta</taxon>
        <taxon>Embryophyta</taxon>
        <taxon>Tracheophyta</taxon>
        <taxon>Spermatophyta</taxon>
        <taxon>Magnoliopsida</taxon>
        <taxon>Liliopsida</taxon>
        <taxon>Poales</taxon>
        <taxon>Poaceae</taxon>
        <taxon>BOP clade</taxon>
        <taxon>Oryzoideae</taxon>
        <taxon>Oryzeae</taxon>
        <taxon>Oryzinae</taxon>
        <taxon>Oryza</taxon>
        <taxon>Oryza sativa</taxon>
    </lineage>
</organism>
<keyword id="KW-0025">Alternative splicing</keyword>
<keyword id="KW-0175">Coiled coil</keyword>
<keyword id="KW-0472">Membrane</keyword>
<keyword id="KW-1185">Reference proteome</keyword>
<keyword id="KW-0812">Transmembrane</keyword>
<keyword id="KW-1133">Transmembrane helix</keyword>
<accession>Q658I5</accession>
<accession>A0A0P0WRT5</accession>
<accession>Q658I4</accession>
<sequence>MGDFNVALVIVAAVVSVLVLLVSVYLLINYQHPDDANQAYFPKLVVVLGITVALLSILMLPADVANRQACRRAIYSGACSLTLPMKTLWLAVYIADAVLVFLVIPFAMFYYEGDQDKSVGKRLTSALLWVAVSAVVCGLILGILYGLVGKVDFTVRHLSSAVETFPNSFTSFSTGQPCISTSPKQCAAYTAPANSQTTWTMRATFPEYVVALATIVGSVLFTIFGGVGIACLPLGLIFSFVRRPKAVITRSQYIKEATELGKKARELKKAAEALHQEEKSGKKGRKWRKNVKALGKELVLLEDDMKALEEMYPQGEQAEATWALTVLGYIGKLLFGAVGLIISIAWVAHIVIYLLIDPPLSSFLNEIFVKLDGVWGLLGTAAFAFFCFYLLIAVIAGEMMLGLKLVFITIHPMKWGGTLMNSFLFNVGLILLCSISVIQFCATAFAYYAQATAAQEIFGHTLQSLRGIKYLYKYNVFQYGFVALAILTLFYYAIFGWRKRKPTGRFQLSN</sequence>
<feature type="chain" id="PRO_0000366938" description="LIMR family protein Os06g0128200">
    <location>
        <begin position="1"/>
        <end position="510"/>
    </location>
</feature>
<feature type="transmembrane region" description="Helical" evidence="1">
    <location>
        <begin position="8"/>
        <end position="28"/>
    </location>
</feature>
<feature type="transmembrane region" description="Helical" evidence="1">
    <location>
        <begin position="44"/>
        <end position="64"/>
    </location>
</feature>
<feature type="transmembrane region" description="Helical" evidence="1">
    <location>
        <begin position="89"/>
        <end position="109"/>
    </location>
</feature>
<feature type="transmembrane region" description="Helical" evidence="1">
    <location>
        <begin position="128"/>
        <end position="148"/>
    </location>
</feature>
<feature type="transmembrane region" description="Helical" evidence="1">
    <location>
        <begin position="221"/>
        <end position="241"/>
    </location>
</feature>
<feature type="transmembrane region" description="Helical" evidence="1">
    <location>
        <begin position="336"/>
        <end position="356"/>
    </location>
</feature>
<feature type="transmembrane region" description="Helical" evidence="1">
    <location>
        <begin position="375"/>
        <end position="395"/>
    </location>
</feature>
<feature type="transmembrane region" description="Helical" evidence="1">
    <location>
        <begin position="427"/>
        <end position="447"/>
    </location>
</feature>
<feature type="transmembrane region" description="Helical" evidence="1">
    <location>
        <begin position="476"/>
        <end position="496"/>
    </location>
</feature>
<feature type="coiled-coil region" evidence="1">
    <location>
        <begin position="252"/>
        <end position="317"/>
    </location>
</feature>
<feature type="splice variant" id="VSP_036586" description="In isoform 2." evidence="2">
    <location>
        <begin position="186"/>
        <end position="255"/>
    </location>
</feature>
<feature type="sequence conflict" description="In Ref. 5; AK060698." evidence="3" ref="5">
    <original>V</original>
    <variation>A</variation>
    <location>
        <position position="9"/>
    </location>
</feature>
<feature type="sequence conflict" description="In Ref. 5; AK060698." evidence="3" ref="5">
    <original>Y</original>
    <variation>C</variation>
    <location>
        <position position="312"/>
    </location>
</feature>
<dbReference type="EMBL" id="AP000391">
    <property type="protein sequence ID" value="BAD44782.1"/>
    <property type="molecule type" value="Genomic_DNA"/>
</dbReference>
<dbReference type="EMBL" id="AP000391">
    <property type="protein sequence ID" value="BAD44783.1"/>
    <property type="molecule type" value="Genomic_DNA"/>
</dbReference>
<dbReference type="EMBL" id="AP002838">
    <property type="protein sequence ID" value="BAD67932.1"/>
    <property type="molecule type" value="Genomic_DNA"/>
</dbReference>
<dbReference type="EMBL" id="AP002838">
    <property type="protein sequence ID" value="BAD67933.1"/>
    <property type="molecule type" value="Genomic_DNA"/>
</dbReference>
<dbReference type="EMBL" id="AP008212">
    <property type="protein sequence ID" value="BAF18584.1"/>
    <property type="molecule type" value="Genomic_DNA"/>
</dbReference>
<dbReference type="EMBL" id="AP014962">
    <property type="protein sequence ID" value="BAS95946.1"/>
    <property type="molecule type" value="Genomic_DNA"/>
</dbReference>
<dbReference type="EMBL" id="AP014962">
    <property type="protein sequence ID" value="BAS95947.1"/>
    <property type="molecule type" value="Genomic_DNA"/>
</dbReference>
<dbReference type="EMBL" id="CM000143">
    <property type="protein sequence ID" value="EEE65018.1"/>
    <property type="molecule type" value="Genomic_DNA"/>
</dbReference>
<dbReference type="EMBL" id="AK060698">
    <property type="status" value="NOT_ANNOTATED_CDS"/>
    <property type="molecule type" value="mRNA"/>
</dbReference>
<dbReference type="EMBL" id="AK068886">
    <property type="protein sequence ID" value="BAG91141.1"/>
    <property type="molecule type" value="mRNA"/>
</dbReference>
<dbReference type="RefSeq" id="XP_015642888.1">
    <property type="nucleotide sequence ID" value="XM_015787402.1"/>
</dbReference>
<dbReference type="SMR" id="Q658I5"/>
<dbReference type="FunCoup" id="Q658I5">
    <property type="interactions" value="940"/>
</dbReference>
<dbReference type="STRING" id="39947.Q658I5"/>
<dbReference type="PaxDb" id="39947-Q658I5"/>
<dbReference type="EnsemblPlants" id="Os06t0128200-01">
    <molecule id="Q658I5-1"/>
    <property type="protein sequence ID" value="Os06t0128200-01"/>
    <property type="gene ID" value="Os06g0128200"/>
</dbReference>
<dbReference type="Gramene" id="Os06t0128200-01">
    <molecule id="Q658I5-1"/>
    <property type="protein sequence ID" value="Os06t0128200-01"/>
    <property type="gene ID" value="Os06g0128200"/>
</dbReference>
<dbReference type="KEGG" id="dosa:Os06g0128200"/>
<dbReference type="eggNOG" id="ENOG502QPKQ">
    <property type="taxonomic scope" value="Eukaryota"/>
</dbReference>
<dbReference type="HOGENOM" id="CLU_026480_2_0_1"/>
<dbReference type="InParanoid" id="Q658I5"/>
<dbReference type="OMA" id="KSAMCWV"/>
<dbReference type="OrthoDB" id="73273at2759"/>
<dbReference type="Proteomes" id="UP000000763">
    <property type="component" value="Chromosome 6"/>
</dbReference>
<dbReference type="Proteomes" id="UP000007752">
    <property type="component" value="Chromosome 6"/>
</dbReference>
<dbReference type="Proteomes" id="UP000059680">
    <property type="component" value="Chromosome 6"/>
</dbReference>
<dbReference type="GO" id="GO:0016020">
    <property type="term" value="C:membrane"/>
    <property type="evidence" value="ECO:0007669"/>
    <property type="project" value="UniProtKB-SubCell"/>
</dbReference>
<dbReference type="InterPro" id="IPR006876">
    <property type="entry name" value="LMBR1-like_membr_prot"/>
</dbReference>
<dbReference type="PANTHER" id="PTHR31652">
    <property type="entry name" value="LIMR FAMILY PROTEIN DDB_G0283707-RELATED"/>
    <property type="match status" value="1"/>
</dbReference>
<dbReference type="PANTHER" id="PTHR31652:SF0">
    <property type="entry name" value="LIMR FAMILY PROTEIN DDB_G0283707-RELATED"/>
    <property type="match status" value="1"/>
</dbReference>
<dbReference type="Pfam" id="PF04791">
    <property type="entry name" value="LMBR1"/>
    <property type="match status" value="2"/>
</dbReference>
<evidence type="ECO:0000255" key="1"/>
<evidence type="ECO:0000303" key="2">
    <source>
    </source>
</evidence>
<evidence type="ECO:0000305" key="3"/>
<comment type="subcellular location">
    <subcellularLocation>
        <location evidence="3">Membrane</location>
        <topology evidence="3">Multi-pass membrane protein</topology>
    </subcellularLocation>
</comment>
<comment type="alternative products">
    <event type="alternative splicing"/>
    <isoform>
        <id>Q658I5-1</id>
        <name>1</name>
        <sequence type="displayed"/>
    </isoform>
    <isoform>
        <id>Q658I5-2</id>
        <name>2</name>
        <sequence type="described" ref="VSP_036586"/>
    </isoform>
</comment>
<comment type="similarity">
    <text evidence="3">Belongs to the LIMR family.</text>
</comment>
<reference key="1">
    <citation type="journal article" date="2005" name="Nature">
        <title>The map-based sequence of the rice genome.</title>
        <authorList>
            <consortium name="International rice genome sequencing project (IRGSP)"/>
        </authorList>
    </citation>
    <scope>NUCLEOTIDE SEQUENCE [LARGE SCALE GENOMIC DNA]</scope>
    <source>
        <strain>cv. Nipponbare</strain>
    </source>
</reference>
<reference key="2">
    <citation type="journal article" date="2008" name="Nucleic Acids Res.">
        <title>The rice annotation project database (RAP-DB): 2008 update.</title>
        <authorList>
            <consortium name="The rice annotation project (RAP)"/>
        </authorList>
    </citation>
    <scope>GENOME REANNOTATION</scope>
    <source>
        <strain>cv. Nipponbare</strain>
    </source>
</reference>
<reference key="3">
    <citation type="journal article" date="2013" name="Rice">
        <title>Improvement of the Oryza sativa Nipponbare reference genome using next generation sequence and optical map data.</title>
        <authorList>
            <person name="Kawahara Y."/>
            <person name="de la Bastide M."/>
            <person name="Hamilton J.P."/>
            <person name="Kanamori H."/>
            <person name="McCombie W.R."/>
            <person name="Ouyang S."/>
            <person name="Schwartz D.C."/>
            <person name="Tanaka T."/>
            <person name="Wu J."/>
            <person name="Zhou S."/>
            <person name="Childs K.L."/>
            <person name="Davidson R.M."/>
            <person name="Lin H."/>
            <person name="Quesada-Ocampo L."/>
            <person name="Vaillancourt B."/>
            <person name="Sakai H."/>
            <person name="Lee S.S."/>
            <person name="Kim J."/>
            <person name="Numa H."/>
            <person name="Itoh T."/>
            <person name="Buell C.R."/>
            <person name="Matsumoto T."/>
        </authorList>
    </citation>
    <scope>GENOME REANNOTATION</scope>
    <source>
        <strain>cv. Nipponbare</strain>
    </source>
</reference>
<reference key="4">
    <citation type="journal article" date="2005" name="PLoS Biol.">
        <title>The genomes of Oryza sativa: a history of duplications.</title>
        <authorList>
            <person name="Yu J."/>
            <person name="Wang J."/>
            <person name="Lin W."/>
            <person name="Li S."/>
            <person name="Li H."/>
            <person name="Zhou J."/>
            <person name="Ni P."/>
            <person name="Dong W."/>
            <person name="Hu S."/>
            <person name="Zeng C."/>
            <person name="Zhang J."/>
            <person name="Zhang Y."/>
            <person name="Li R."/>
            <person name="Xu Z."/>
            <person name="Li S."/>
            <person name="Li X."/>
            <person name="Zheng H."/>
            <person name="Cong L."/>
            <person name="Lin L."/>
            <person name="Yin J."/>
            <person name="Geng J."/>
            <person name="Li G."/>
            <person name="Shi J."/>
            <person name="Liu J."/>
            <person name="Lv H."/>
            <person name="Li J."/>
            <person name="Wang J."/>
            <person name="Deng Y."/>
            <person name="Ran L."/>
            <person name="Shi X."/>
            <person name="Wang X."/>
            <person name="Wu Q."/>
            <person name="Li C."/>
            <person name="Ren X."/>
            <person name="Wang J."/>
            <person name="Wang X."/>
            <person name="Li D."/>
            <person name="Liu D."/>
            <person name="Zhang X."/>
            <person name="Ji Z."/>
            <person name="Zhao W."/>
            <person name="Sun Y."/>
            <person name="Zhang Z."/>
            <person name="Bao J."/>
            <person name="Han Y."/>
            <person name="Dong L."/>
            <person name="Ji J."/>
            <person name="Chen P."/>
            <person name="Wu S."/>
            <person name="Liu J."/>
            <person name="Xiao Y."/>
            <person name="Bu D."/>
            <person name="Tan J."/>
            <person name="Yang L."/>
            <person name="Ye C."/>
            <person name="Zhang J."/>
            <person name="Xu J."/>
            <person name="Zhou Y."/>
            <person name="Yu Y."/>
            <person name="Zhang B."/>
            <person name="Zhuang S."/>
            <person name="Wei H."/>
            <person name="Liu B."/>
            <person name="Lei M."/>
            <person name="Yu H."/>
            <person name="Li Y."/>
            <person name="Xu H."/>
            <person name="Wei S."/>
            <person name="He X."/>
            <person name="Fang L."/>
            <person name="Zhang Z."/>
            <person name="Zhang Y."/>
            <person name="Huang X."/>
            <person name="Su Z."/>
            <person name="Tong W."/>
            <person name="Li J."/>
            <person name="Tong Z."/>
            <person name="Li S."/>
            <person name="Ye J."/>
            <person name="Wang L."/>
            <person name="Fang L."/>
            <person name="Lei T."/>
            <person name="Chen C.-S."/>
            <person name="Chen H.-C."/>
            <person name="Xu Z."/>
            <person name="Li H."/>
            <person name="Huang H."/>
            <person name="Zhang F."/>
            <person name="Xu H."/>
            <person name="Li N."/>
            <person name="Zhao C."/>
            <person name="Li S."/>
            <person name="Dong L."/>
            <person name="Huang Y."/>
            <person name="Li L."/>
            <person name="Xi Y."/>
            <person name="Qi Q."/>
            <person name="Li W."/>
            <person name="Zhang B."/>
            <person name="Hu W."/>
            <person name="Zhang Y."/>
            <person name="Tian X."/>
            <person name="Jiao Y."/>
            <person name="Liang X."/>
            <person name="Jin J."/>
            <person name="Gao L."/>
            <person name="Zheng W."/>
            <person name="Hao B."/>
            <person name="Liu S.-M."/>
            <person name="Wang W."/>
            <person name="Yuan L."/>
            <person name="Cao M."/>
            <person name="McDermott J."/>
            <person name="Samudrala R."/>
            <person name="Wang J."/>
            <person name="Wong G.K.-S."/>
            <person name="Yang H."/>
        </authorList>
    </citation>
    <scope>NUCLEOTIDE SEQUENCE [LARGE SCALE GENOMIC DNA]</scope>
    <source>
        <strain>cv. Nipponbare</strain>
    </source>
</reference>
<reference key="5">
    <citation type="journal article" date="2003" name="Science">
        <title>Collection, mapping, and annotation of over 28,000 cDNA clones from japonica rice.</title>
        <authorList>
            <consortium name="The rice full-length cDNA consortium"/>
        </authorList>
    </citation>
    <scope>NUCLEOTIDE SEQUENCE [LARGE SCALE MRNA] (ISOFORMS 1 AND 2)</scope>
    <source>
        <strain>cv. Nipponbare</strain>
    </source>
</reference>
<proteinExistence type="evidence at transcript level"/>
<protein>
    <recommendedName>
        <fullName>LIMR family protein Os06g0128200</fullName>
    </recommendedName>
</protein>